<gene>
    <name evidence="2" type="primary">mutM</name>
    <name evidence="2" type="synonym">fpg</name>
    <name type="ordered locus">JTY_2941</name>
</gene>
<organism>
    <name type="scientific">Mycobacterium bovis (strain BCG / Tokyo 172 / ATCC 35737 / TMC 1019)</name>
    <dbReference type="NCBI Taxonomy" id="561275"/>
    <lineage>
        <taxon>Bacteria</taxon>
        <taxon>Bacillati</taxon>
        <taxon>Actinomycetota</taxon>
        <taxon>Actinomycetes</taxon>
        <taxon>Mycobacteriales</taxon>
        <taxon>Mycobacteriaceae</taxon>
        <taxon>Mycobacterium</taxon>
        <taxon>Mycobacterium tuberculosis complex</taxon>
    </lineage>
</organism>
<name>FPG_MYCBT</name>
<accession>C1AG40</accession>
<dbReference type="EC" id="3.2.2.23" evidence="2"/>
<dbReference type="EC" id="4.2.99.18" evidence="2"/>
<dbReference type="EMBL" id="AP010918">
    <property type="protein sequence ID" value="BAH27219.1"/>
    <property type="molecule type" value="Genomic_DNA"/>
</dbReference>
<dbReference type="RefSeq" id="WP_003414814.1">
    <property type="nucleotide sequence ID" value="NZ_CP014566.1"/>
</dbReference>
<dbReference type="SMR" id="C1AG40"/>
<dbReference type="GeneID" id="45426912"/>
<dbReference type="KEGG" id="mbt:JTY_2941"/>
<dbReference type="HOGENOM" id="CLU_038423_1_2_11"/>
<dbReference type="GO" id="GO:0034039">
    <property type="term" value="F:8-oxo-7,8-dihydroguanine DNA N-glycosylase activity"/>
    <property type="evidence" value="ECO:0007669"/>
    <property type="project" value="TreeGrafter"/>
</dbReference>
<dbReference type="GO" id="GO:0140078">
    <property type="term" value="F:class I DNA-(apurinic or apyrimidinic site) endonuclease activity"/>
    <property type="evidence" value="ECO:0007669"/>
    <property type="project" value="UniProtKB-EC"/>
</dbReference>
<dbReference type="GO" id="GO:0003684">
    <property type="term" value="F:damaged DNA binding"/>
    <property type="evidence" value="ECO:0007669"/>
    <property type="project" value="InterPro"/>
</dbReference>
<dbReference type="GO" id="GO:0008270">
    <property type="term" value="F:zinc ion binding"/>
    <property type="evidence" value="ECO:0007669"/>
    <property type="project" value="UniProtKB-UniRule"/>
</dbReference>
<dbReference type="GO" id="GO:0006284">
    <property type="term" value="P:base-excision repair"/>
    <property type="evidence" value="ECO:0007669"/>
    <property type="project" value="InterPro"/>
</dbReference>
<dbReference type="CDD" id="cd08966">
    <property type="entry name" value="EcFpg-like_N"/>
    <property type="match status" value="1"/>
</dbReference>
<dbReference type="FunFam" id="1.10.8.50:FF:000003">
    <property type="entry name" value="Formamidopyrimidine-DNA glycosylase"/>
    <property type="match status" value="1"/>
</dbReference>
<dbReference type="FunFam" id="3.20.190.10:FF:000006">
    <property type="entry name" value="Formamidopyrimidine-DNA glycosylase"/>
    <property type="match status" value="1"/>
</dbReference>
<dbReference type="Gene3D" id="1.10.8.50">
    <property type="match status" value="1"/>
</dbReference>
<dbReference type="Gene3D" id="3.20.190.10">
    <property type="entry name" value="MutM-like, N-terminal"/>
    <property type="match status" value="1"/>
</dbReference>
<dbReference type="HAMAP" id="MF_00103">
    <property type="entry name" value="Fapy_DNA_glycosyl"/>
    <property type="match status" value="1"/>
</dbReference>
<dbReference type="InterPro" id="IPR015886">
    <property type="entry name" value="DNA_glyclase/AP_lyase_DNA-bd"/>
</dbReference>
<dbReference type="InterPro" id="IPR015887">
    <property type="entry name" value="DNA_glyclase_Znf_dom_DNA_BS"/>
</dbReference>
<dbReference type="InterPro" id="IPR020629">
    <property type="entry name" value="Formamido-pyr_DNA_Glyclase"/>
</dbReference>
<dbReference type="InterPro" id="IPR012319">
    <property type="entry name" value="FPG_cat"/>
</dbReference>
<dbReference type="InterPro" id="IPR035937">
    <property type="entry name" value="MutM-like_N-ter"/>
</dbReference>
<dbReference type="InterPro" id="IPR010979">
    <property type="entry name" value="Ribosomal_uS13-like_H2TH"/>
</dbReference>
<dbReference type="InterPro" id="IPR000214">
    <property type="entry name" value="Znf_DNA_glyclase/AP_lyase"/>
</dbReference>
<dbReference type="InterPro" id="IPR010663">
    <property type="entry name" value="Znf_FPG/IleRS"/>
</dbReference>
<dbReference type="NCBIfam" id="TIGR00577">
    <property type="entry name" value="fpg"/>
    <property type="match status" value="1"/>
</dbReference>
<dbReference type="NCBIfam" id="NF002211">
    <property type="entry name" value="PRK01103.1"/>
    <property type="match status" value="1"/>
</dbReference>
<dbReference type="PANTHER" id="PTHR22993">
    <property type="entry name" value="FORMAMIDOPYRIMIDINE-DNA GLYCOSYLASE"/>
    <property type="match status" value="1"/>
</dbReference>
<dbReference type="PANTHER" id="PTHR22993:SF9">
    <property type="entry name" value="FORMAMIDOPYRIMIDINE-DNA GLYCOSYLASE"/>
    <property type="match status" value="1"/>
</dbReference>
<dbReference type="Pfam" id="PF01149">
    <property type="entry name" value="Fapy_DNA_glyco"/>
    <property type="match status" value="1"/>
</dbReference>
<dbReference type="Pfam" id="PF06831">
    <property type="entry name" value="H2TH"/>
    <property type="match status" value="1"/>
</dbReference>
<dbReference type="Pfam" id="PF06827">
    <property type="entry name" value="zf-FPG_IleRS"/>
    <property type="match status" value="1"/>
</dbReference>
<dbReference type="SMART" id="SM00898">
    <property type="entry name" value="Fapy_DNA_glyco"/>
    <property type="match status" value="1"/>
</dbReference>
<dbReference type="SMART" id="SM01232">
    <property type="entry name" value="H2TH"/>
    <property type="match status" value="1"/>
</dbReference>
<dbReference type="SUPFAM" id="SSF57716">
    <property type="entry name" value="Glucocorticoid receptor-like (DNA-binding domain)"/>
    <property type="match status" value="1"/>
</dbReference>
<dbReference type="SUPFAM" id="SSF81624">
    <property type="entry name" value="N-terminal domain of MutM-like DNA repair proteins"/>
    <property type="match status" value="1"/>
</dbReference>
<dbReference type="SUPFAM" id="SSF46946">
    <property type="entry name" value="S13-like H2TH domain"/>
    <property type="match status" value="1"/>
</dbReference>
<dbReference type="PROSITE" id="PS51068">
    <property type="entry name" value="FPG_CAT"/>
    <property type="match status" value="1"/>
</dbReference>
<dbReference type="PROSITE" id="PS01242">
    <property type="entry name" value="ZF_FPG_1"/>
    <property type="match status" value="1"/>
</dbReference>
<dbReference type="PROSITE" id="PS51066">
    <property type="entry name" value="ZF_FPG_2"/>
    <property type="match status" value="1"/>
</dbReference>
<comment type="function">
    <text evidence="2">Involved in base excision repair of DNA damaged by oxidation or by mutagenic agents. Acts as a DNA glycosylase that recognizes and removes damaged bases. Has a preference for oxidized purines, such as 7,8-dihydro-8-oxoguanine (8-oxoG). Has AP (apurinic/apyrimidinic) lyase activity and introduces nicks in the DNA strand. Cleaves the DNA backbone by beta-delta elimination to generate a single-strand break at the site of the removed base with both 3'- and 5'-phosphates.</text>
</comment>
<comment type="catalytic activity">
    <reaction evidence="2">
        <text>Hydrolysis of DNA containing ring-opened 7-methylguanine residues, releasing 2,6-diamino-4-hydroxy-5-(N-methyl)formamidopyrimidine.</text>
        <dbReference type="EC" id="3.2.2.23"/>
    </reaction>
</comment>
<comment type="catalytic activity">
    <reaction evidence="2">
        <text>2'-deoxyribonucleotide-(2'-deoxyribose 5'-phosphate)-2'-deoxyribonucleotide-DNA = a 3'-end 2'-deoxyribonucleotide-(2,3-dehydro-2,3-deoxyribose 5'-phosphate)-DNA + a 5'-end 5'-phospho-2'-deoxyribonucleoside-DNA + H(+)</text>
        <dbReference type="Rhea" id="RHEA:66592"/>
        <dbReference type="Rhea" id="RHEA-COMP:13180"/>
        <dbReference type="Rhea" id="RHEA-COMP:16897"/>
        <dbReference type="Rhea" id="RHEA-COMP:17067"/>
        <dbReference type="ChEBI" id="CHEBI:15378"/>
        <dbReference type="ChEBI" id="CHEBI:136412"/>
        <dbReference type="ChEBI" id="CHEBI:157695"/>
        <dbReference type="ChEBI" id="CHEBI:167181"/>
        <dbReference type="EC" id="4.2.99.18"/>
    </reaction>
</comment>
<comment type="cofactor">
    <cofactor evidence="2">
        <name>Zn(2+)</name>
        <dbReference type="ChEBI" id="CHEBI:29105"/>
    </cofactor>
    <text evidence="2">Binds 1 zinc ion per subunit.</text>
</comment>
<comment type="subunit">
    <text evidence="2">Monomer.</text>
</comment>
<comment type="similarity">
    <text evidence="2">Belongs to the FPG family.</text>
</comment>
<sequence length="289" mass="31951">MPELPEVEVVRRGLQAHVTGRTITEVRVHHPRAVRRHDAGPADLTARLRGARINGTDRRGKYLWLTLNTAGVHRPTDTALVVHLGMSGQMLLGAVPCAAHVRISALLDDGTVLSFADQRTFGGWLLADLVTVDGSVVPVPVAHLARDPLDPRFDCDAVVKVLRRKHSELKRQLLDQRVVSGIGNIYADEALWRAKVNGAHVAATLRCRRLGAVLHAAADVMREALAKGGTSFDSLYVNVNGESGYFERSLDAYGREGENCRRCGAVIRRERFMNRSSFYCPRCQPRPRK</sequence>
<evidence type="ECO:0000250" key="1"/>
<evidence type="ECO:0000255" key="2">
    <source>
        <dbReference type="HAMAP-Rule" id="MF_00103"/>
    </source>
</evidence>
<feature type="initiator methionine" description="Removed" evidence="1">
    <location>
        <position position="1"/>
    </location>
</feature>
<feature type="chain" id="PRO_1000118896" description="Formamidopyrimidine-DNA glycosylase">
    <location>
        <begin position="2"/>
        <end position="289"/>
    </location>
</feature>
<feature type="zinc finger region" description="FPG-type" evidence="2">
    <location>
        <begin position="251"/>
        <end position="285"/>
    </location>
</feature>
<feature type="active site" description="Schiff-base intermediate with DNA" evidence="2">
    <location>
        <position position="2"/>
    </location>
</feature>
<feature type="active site" description="Proton donor" evidence="2">
    <location>
        <position position="3"/>
    </location>
</feature>
<feature type="active site" description="Proton donor; for beta-elimination activity" evidence="2">
    <location>
        <position position="61"/>
    </location>
</feature>
<feature type="active site" description="Proton donor; for delta-elimination activity" evidence="2">
    <location>
        <position position="275"/>
    </location>
</feature>
<feature type="binding site" evidence="2">
    <location>
        <position position="100"/>
    </location>
    <ligand>
        <name>DNA</name>
        <dbReference type="ChEBI" id="CHEBI:16991"/>
    </ligand>
</feature>
<feature type="binding site" evidence="2">
    <location>
        <position position="119"/>
    </location>
    <ligand>
        <name>DNA</name>
        <dbReference type="ChEBI" id="CHEBI:16991"/>
    </ligand>
</feature>
<feature type="binding site" evidence="2">
    <location>
        <position position="165"/>
    </location>
    <ligand>
        <name>DNA</name>
        <dbReference type="ChEBI" id="CHEBI:16991"/>
    </ligand>
</feature>
<proteinExistence type="inferred from homology"/>
<keyword id="KW-0227">DNA damage</keyword>
<keyword id="KW-0234">DNA repair</keyword>
<keyword id="KW-0238">DNA-binding</keyword>
<keyword id="KW-0326">Glycosidase</keyword>
<keyword id="KW-0378">Hydrolase</keyword>
<keyword id="KW-0456">Lyase</keyword>
<keyword id="KW-0479">Metal-binding</keyword>
<keyword id="KW-0511">Multifunctional enzyme</keyword>
<keyword id="KW-0862">Zinc</keyword>
<keyword id="KW-0863">Zinc-finger</keyword>
<reference key="1">
    <citation type="journal article" date="2009" name="Vaccine">
        <title>Whole genome sequence analysis of Mycobacterium bovis bacillus Calmette-Guerin (BCG) Tokyo 172: a comparative study of BCG vaccine substrains.</title>
        <authorList>
            <person name="Seki M."/>
            <person name="Honda I."/>
            <person name="Fujita I."/>
            <person name="Yano I."/>
            <person name="Yamamoto S."/>
            <person name="Koyama A."/>
        </authorList>
    </citation>
    <scope>NUCLEOTIDE SEQUENCE [LARGE SCALE GENOMIC DNA]</scope>
    <source>
        <strain>BCG / Tokyo 172 / ATCC 35737 / TMC 1019</strain>
    </source>
</reference>
<protein>
    <recommendedName>
        <fullName evidence="2">Formamidopyrimidine-DNA glycosylase</fullName>
        <shortName evidence="2">Fapy-DNA glycosylase</shortName>
        <ecNumber evidence="2">3.2.2.23</ecNumber>
    </recommendedName>
    <alternativeName>
        <fullName evidence="2">DNA-(apurinic or apyrimidinic site) lyase MutM</fullName>
        <shortName evidence="2">AP lyase MutM</shortName>
        <ecNumber evidence="2">4.2.99.18</ecNumber>
    </alternativeName>
</protein>